<dbReference type="EC" id="6.1.1.19" evidence="1"/>
<dbReference type="EMBL" id="CT978603">
    <property type="protein sequence ID" value="CAK29144.1"/>
    <property type="molecule type" value="Genomic_DNA"/>
</dbReference>
<dbReference type="SMR" id="A5GW85"/>
<dbReference type="STRING" id="316278.SynRCC307_2241"/>
<dbReference type="KEGG" id="syr:SynRCC307_2241"/>
<dbReference type="eggNOG" id="COG0018">
    <property type="taxonomic scope" value="Bacteria"/>
</dbReference>
<dbReference type="HOGENOM" id="CLU_006406_5_1_3"/>
<dbReference type="OrthoDB" id="9805987at2"/>
<dbReference type="Proteomes" id="UP000001115">
    <property type="component" value="Chromosome"/>
</dbReference>
<dbReference type="GO" id="GO:0005737">
    <property type="term" value="C:cytoplasm"/>
    <property type="evidence" value="ECO:0007669"/>
    <property type="project" value="UniProtKB-SubCell"/>
</dbReference>
<dbReference type="GO" id="GO:0004814">
    <property type="term" value="F:arginine-tRNA ligase activity"/>
    <property type="evidence" value="ECO:0007669"/>
    <property type="project" value="UniProtKB-UniRule"/>
</dbReference>
<dbReference type="GO" id="GO:0005524">
    <property type="term" value="F:ATP binding"/>
    <property type="evidence" value="ECO:0007669"/>
    <property type="project" value="UniProtKB-UniRule"/>
</dbReference>
<dbReference type="GO" id="GO:0006420">
    <property type="term" value="P:arginyl-tRNA aminoacylation"/>
    <property type="evidence" value="ECO:0007669"/>
    <property type="project" value="UniProtKB-UniRule"/>
</dbReference>
<dbReference type="CDD" id="cd07956">
    <property type="entry name" value="Anticodon_Ia_Arg"/>
    <property type="match status" value="1"/>
</dbReference>
<dbReference type="CDD" id="cd00671">
    <property type="entry name" value="ArgRS_core"/>
    <property type="match status" value="1"/>
</dbReference>
<dbReference type="FunFam" id="3.40.50.620:FF:000030">
    <property type="entry name" value="Arginine--tRNA ligase"/>
    <property type="match status" value="1"/>
</dbReference>
<dbReference type="FunFam" id="1.10.730.10:FF:000006">
    <property type="entry name" value="Arginyl-tRNA synthetase 2, mitochondrial"/>
    <property type="match status" value="1"/>
</dbReference>
<dbReference type="Gene3D" id="3.30.1360.70">
    <property type="entry name" value="Arginyl tRNA synthetase N-terminal domain"/>
    <property type="match status" value="1"/>
</dbReference>
<dbReference type="Gene3D" id="3.40.50.620">
    <property type="entry name" value="HUPs"/>
    <property type="match status" value="1"/>
</dbReference>
<dbReference type="Gene3D" id="1.10.730.10">
    <property type="entry name" value="Isoleucyl-tRNA Synthetase, Domain 1"/>
    <property type="match status" value="1"/>
</dbReference>
<dbReference type="HAMAP" id="MF_00123">
    <property type="entry name" value="Arg_tRNA_synth"/>
    <property type="match status" value="1"/>
</dbReference>
<dbReference type="InterPro" id="IPR001412">
    <property type="entry name" value="aa-tRNA-synth_I_CS"/>
</dbReference>
<dbReference type="InterPro" id="IPR001278">
    <property type="entry name" value="Arg-tRNA-ligase"/>
</dbReference>
<dbReference type="InterPro" id="IPR005148">
    <property type="entry name" value="Arg-tRNA-synth_N"/>
</dbReference>
<dbReference type="InterPro" id="IPR036695">
    <property type="entry name" value="Arg-tRNA-synth_N_sf"/>
</dbReference>
<dbReference type="InterPro" id="IPR035684">
    <property type="entry name" value="ArgRS_core"/>
</dbReference>
<dbReference type="InterPro" id="IPR008909">
    <property type="entry name" value="DALR_anticod-bd"/>
</dbReference>
<dbReference type="InterPro" id="IPR014729">
    <property type="entry name" value="Rossmann-like_a/b/a_fold"/>
</dbReference>
<dbReference type="InterPro" id="IPR009080">
    <property type="entry name" value="tRNAsynth_Ia_anticodon-bd"/>
</dbReference>
<dbReference type="NCBIfam" id="TIGR00456">
    <property type="entry name" value="argS"/>
    <property type="match status" value="1"/>
</dbReference>
<dbReference type="PANTHER" id="PTHR11956:SF5">
    <property type="entry name" value="ARGININE--TRNA LIGASE, CYTOPLASMIC"/>
    <property type="match status" value="1"/>
</dbReference>
<dbReference type="PANTHER" id="PTHR11956">
    <property type="entry name" value="ARGINYL-TRNA SYNTHETASE"/>
    <property type="match status" value="1"/>
</dbReference>
<dbReference type="Pfam" id="PF03485">
    <property type="entry name" value="Arg_tRNA_synt_N"/>
    <property type="match status" value="1"/>
</dbReference>
<dbReference type="Pfam" id="PF05746">
    <property type="entry name" value="DALR_1"/>
    <property type="match status" value="1"/>
</dbReference>
<dbReference type="Pfam" id="PF00750">
    <property type="entry name" value="tRNA-synt_1d"/>
    <property type="match status" value="1"/>
</dbReference>
<dbReference type="PRINTS" id="PR01038">
    <property type="entry name" value="TRNASYNTHARG"/>
</dbReference>
<dbReference type="SMART" id="SM01016">
    <property type="entry name" value="Arg_tRNA_synt_N"/>
    <property type="match status" value="1"/>
</dbReference>
<dbReference type="SMART" id="SM00836">
    <property type="entry name" value="DALR_1"/>
    <property type="match status" value="1"/>
</dbReference>
<dbReference type="SUPFAM" id="SSF47323">
    <property type="entry name" value="Anticodon-binding domain of a subclass of class I aminoacyl-tRNA synthetases"/>
    <property type="match status" value="1"/>
</dbReference>
<dbReference type="SUPFAM" id="SSF55190">
    <property type="entry name" value="Arginyl-tRNA synthetase (ArgRS), N-terminal 'additional' domain"/>
    <property type="match status" value="1"/>
</dbReference>
<dbReference type="SUPFAM" id="SSF52374">
    <property type="entry name" value="Nucleotidylyl transferase"/>
    <property type="match status" value="1"/>
</dbReference>
<dbReference type="PROSITE" id="PS00178">
    <property type="entry name" value="AA_TRNA_LIGASE_I"/>
    <property type="match status" value="1"/>
</dbReference>
<organism>
    <name type="scientific">Synechococcus sp. (strain RCC307)</name>
    <dbReference type="NCBI Taxonomy" id="316278"/>
    <lineage>
        <taxon>Bacteria</taxon>
        <taxon>Bacillati</taxon>
        <taxon>Cyanobacteriota</taxon>
        <taxon>Cyanophyceae</taxon>
        <taxon>Synechococcales</taxon>
        <taxon>Synechococcaceae</taxon>
        <taxon>Synechococcus</taxon>
    </lineage>
</organism>
<comment type="catalytic activity">
    <reaction evidence="1">
        <text>tRNA(Arg) + L-arginine + ATP = L-arginyl-tRNA(Arg) + AMP + diphosphate</text>
        <dbReference type="Rhea" id="RHEA:20301"/>
        <dbReference type="Rhea" id="RHEA-COMP:9658"/>
        <dbReference type="Rhea" id="RHEA-COMP:9673"/>
        <dbReference type="ChEBI" id="CHEBI:30616"/>
        <dbReference type="ChEBI" id="CHEBI:32682"/>
        <dbReference type="ChEBI" id="CHEBI:33019"/>
        <dbReference type="ChEBI" id="CHEBI:78442"/>
        <dbReference type="ChEBI" id="CHEBI:78513"/>
        <dbReference type="ChEBI" id="CHEBI:456215"/>
        <dbReference type="EC" id="6.1.1.19"/>
    </reaction>
</comment>
<comment type="subunit">
    <text evidence="1">Monomer.</text>
</comment>
<comment type="subcellular location">
    <subcellularLocation>
        <location evidence="1">Cytoplasm</location>
    </subcellularLocation>
</comment>
<comment type="similarity">
    <text evidence="1">Belongs to the class-I aminoacyl-tRNA synthetase family.</text>
</comment>
<protein>
    <recommendedName>
        <fullName evidence="1">Arginine--tRNA ligase</fullName>
        <ecNumber evidence="1">6.1.1.19</ecNumber>
    </recommendedName>
    <alternativeName>
        <fullName evidence="1">Arginyl-tRNA synthetase</fullName>
        <shortName evidence="1">ArgRS</shortName>
    </alternativeName>
</protein>
<reference key="1">
    <citation type="submission" date="2006-05" db="EMBL/GenBank/DDBJ databases">
        <authorList>
            <consortium name="Genoscope"/>
        </authorList>
    </citation>
    <scope>NUCLEOTIDE SEQUENCE [LARGE SCALE GENOMIC DNA]</scope>
    <source>
        <strain>RCC307</strain>
    </source>
</reference>
<evidence type="ECO:0000255" key="1">
    <source>
        <dbReference type="HAMAP-Rule" id="MF_00123"/>
    </source>
</evidence>
<sequence length="590" mass="64536">MLRIAQTLEAQLRAAMQQAFPEADGELNPALGPASKPEFGDFQANGALALAKPLKQAPRQIAAAIVEQLQNNPEFSALAEAPQIAGPGFINITLKPSVLAAEVRQRIGDPRLGVAAVEQAEAPVIVDFSSPNIAKEMHVGHLRSTIIGDCLARVLEFRGHQVLRLNHVGDWGTQFGMLITHLKQVAPEALNTADAIDLGDLVAFYREAKKRFDDDEAFQTTSREEVVKLQGGDATSLKAWGLLCDQSRREFQKIYDRLDIRLNERGESFYNPQLAAVVDDLRSSGLLVTDEGAGCVFLEGVVGKEGKPLPLIVQKSDGGFNYATTDLAAIRYRLGSAGDGAGRVIYVTDAGQAAHFAGVFQVAKRAGWVPAAASLEHVPFGLVQGDDGKKLKTRAGDTVRLKDLLDEAVERAQADLRRRLEEEERQESESFIDQVATTVGLAAVKYADLSTNRITNYQFSFERMLALTGNTAPYLLYAVVRISGIARKGGALDGELPERLVFEEPQEWALIRQLLQLDAVISEVESDLLPNRLCTYLFELSQSFNRFYDQVPVLKADEPMRSSRLALCRLAADTLKLGLSLLGIPSLERM</sequence>
<proteinExistence type="inferred from homology"/>
<accession>A5GW85</accession>
<keyword id="KW-0030">Aminoacyl-tRNA synthetase</keyword>
<keyword id="KW-0067">ATP-binding</keyword>
<keyword id="KW-0963">Cytoplasm</keyword>
<keyword id="KW-0436">Ligase</keyword>
<keyword id="KW-0547">Nucleotide-binding</keyword>
<keyword id="KW-0648">Protein biosynthesis</keyword>
<keyword id="KW-1185">Reference proteome</keyword>
<feature type="chain" id="PRO_1000018137" description="Arginine--tRNA ligase">
    <location>
        <begin position="1"/>
        <end position="590"/>
    </location>
</feature>
<feature type="short sequence motif" description="'HIGH' region">
    <location>
        <begin position="131"/>
        <end position="141"/>
    </location>
</feature>
<name>SYR_SYNR3</name>
<gene>
    <name evidence="1" type="primary">argS</name>
    <name type="ordered locus">SynRCC307_2241</name>
</gene>